<name>RR15_AMBTC</name>
<comment type="subunit">
    <text evidence="1">Part of the 30S ribosomal subunit.</text>
</comment>
<comment type="subcellular location">
    <subcellularLocation>
        <location>Plastid</location>
        <location>Chloroplast</location>
    </subcellularLocation>
</comment>
<comment type="similarity">
    <text evidence="2">Belongs to the universal ribosomal protein uS15 family.</text>
</comment>
<gene>
    <name type="primary">rps15</name>
</gene>
<keyword id="KW-0150">Chloroplast</keyword>
<keyword id="KW-0934">Plastid</keyword>
<keyword id="KW-1185">Reference proteome</keyword>
<keyword id="KW-0687">Ribonucleoprotein</keyword>
<keyword id="KW-0689">Ribosomal protein</keyword>
<accession>Q70XV7</accession>
<evidence type="ECO:0000250" key="1"/>
<evidence type="ECO:0000305" key="2"/>
<geneLocation type="chloroplast"/>
<reference key="1">
    <citation type="journal article" date="2003" name="Mol. Biol. Evol.">
        <title>Analysis of the Amborella trichopoda chloroplast genome sequence suggests that Amborella is not a basal angiosperm.</title>
        <authorList>
            <person name="Goremykin V.V."/>
            <person name="Hirsch-Ernst K.I."/>
            <person name="Wolfl S."/>
            <person name="Hellwig F.H."/>
        </authorList>
    </citation>
    <scope>NUCLEOTIDE SEQUENCE [LARGE SCALE GENOMIC DNA]</scope>
</reference>
<organism>
    <name type="scientific">Amborella trichopoda</name>
    <dbReference type="NCBI Taxonomy" id="13333"/>
    <lineage>
        <taxon>Eukaryota</taxon>
        <taxon>Viridiplantae</taxon>
        <taxon>Streptophyta</taxon>
        <taxon>Embryophyta</taxon>
        <taxon>Tracheophyta</taxon>
        <taxon>Spermatophyta</taxon>
        <taxon>Magnoliopsida</taxon>
        <taxon>Amborellales</taxon>
        <taxon>Amborellaceae</taxon>
        <taxon>Amborella</taxon>
    </lineage>
</organism>
<feature type="chain" id="PRO_0000115627" description="Small ribosomal subunit protein uS15c">
    <location>
        <begin position="1"/>
        <end position="87"/>
    </location>
</feature>
<dbReference type="EMBL" id="AJ506156">
    <property type="protein sequence ID" value="CAD45163.1"/>
    <property type="molecule type" value="Genomic_DNA"/>
</dbReference>
<dbReference type="RefSeq" id="NP_904156.1">
    <property type="nucleotide sequence ID" value="NC_005086.1"/>
</dbReference>
<dbReference type="SMR" id="Q70XV7"/>
<dbReference type="STRING" id="13333.Q70XV7"/>
<dbReference type="GeneID" id="2546609"/>
<dbReference type="KEGG" id="atr:2546609"/>
<dbReference type="OrthoDB" id="441444at2759"/>
<dbReference type="Proteomes" id="UP000017836">
    <property type="component" value="Chloroplast"/>
</dbReference>
<dbReference type="GO" id="GO:0009507">
    <property type="term" value="C:chloroplast"/>
    <property type="evidence" value="ECO:0007669"/>
    <property type="project" value="UniProtKB-SubCell"/>
</dbReference>
<dbReference type="GO" id="GO:1990904">
    <property type="term" value="C:ribonucleoprotein complex"/>
    <property type="evidence" value="ECO:0007669"/>
    <property type="project" value="UniProtKB-KW"/>
</dbReference>
<dbReference type="GO" id="GO:0005840">
    <property type="term" value="C:ribosome"/>
    <property type="evidence" value="ECO:0007669"/>
    <property type="project" value="UniProtKB-KW"/>
</dbReference>
<dbReference type="GO" id="GO:0003735">
    <property type="term" value="F:structural constituent of ribosome"/>
    <property type="evidence" value="ECO:0007669"/>
    <property type="project" value="InterPro"/>
</dbReference>
<dbReference type="GO" id="GO:0006412">
    <property type="term" value="P:translation"/>
    <property type="evidence" value="ECO:0007669"/>
    <property type="project" value="UniProtKB-UniRule"/>
</dbReference>
<dbReference type="CDD" id="cd00353">
    <property type="entry name" value="Ribosomal_S15p_S13e"/>
    <property type="match status" value="1"/>
</dbReference>
<dbReference type="Gene3D" id="1.10.287.10">
    <property type="entry name" value="S15/NS1, RNA-binding"/>
    <property type="match status" value="1"/>
</dbReference>
<dbReference type="HAMAP" id="MF_01343_B">
    <property type="entry name" value="Ribosomal_uS15_B"/>
    <property type="match status" value="1"/>
</dbReference>
<dbReference type="InterPro" id="IPR000589">
    <property type="entry name" value="Ribosomal_uS15"/>
</dbReference>
<dbReference type="InterPro" id="IPR005290">
    <property type="entry name" value="Ribosomal_uS15_bac-type"/>
</dbReference>
<dbReference type="InterPro" id="IPR009068">
    <property type="entry name" value="uS15_NS1_RNA-bd_sf"/>
</dbReference>
<dbReference type="NCBIfam" id="TIGR00952">
    <property type="entry name" value="S15_bact"/>
    <property type="match status" value="1"/>
</dbReference>
<dbReference type="PANTHER" id="PTHR23321">
    <property type="entry name" value="RIBOSOMAL PROTEIN S15, BACTERIAL AND ORGANELLAR"/>
    <property type="match status" value="1"/>
</dbReference>
<dbReference type="PANTHER" id="PTHR23321:SF26">
    <property type="entry name" value="SMALL RIBOSOMAL SUBUNIT PROTEIN US15M"/>
    <property type="match status" value="1"/>
</dbReference>
<dbReference type="Pfam" id="PF00312">
    <property type="entry name" value="Ribosomal_S15"/>
    <property type="match status" value="1"/>
</dbReference>
<dbReference type="SMART" id="SM01387">
    <property type="entry name" value="Ribosomal_S15"/>
    <property type="match status" value="1"/>
</dbReference>
<dbReference type="SUPFAM" id="SSF47060">
    <property type="entry name" value="S15/NS1 RNA-binding domain"/>
    <property type="match status" value="1"/>
</dbReference>
<protein>
    <recommendedName>
        <fullName evidence="2">Small ribosomal subunit protein uS15c</fullName>
    </recommendedName>
    <alternativeName>
        <fullName>30S ribosomal protein S15, chloroplastic</fullName>
    </alternativeName>
</protein>
<sequence>MVINSFISSISKEEKKGSVEFQVFCFTDKIRKLTSHLELHKKDFLSQRGMRKILGKRQRMLAYLSNKNKVRYKKLIGQLNIREPKTR</sequence>
<proteinExistence type="inferred from homology"/>